<feature type="chain" id="PRO_1000115007" description="Small ribosomal subunit protein uS2">
    <location>
        <begin position="1"/>
        <end position="233"/>
    </location>
</feature>
<accession>B1II66</accession>
<name>RS2_CLOBK</name>
<gene>
    <name evidence="1" type="primary">rpsB</name>
    <name type="ordered locus">CLD_2205</name>
</gene>
<dbReference type="EMBL" id="CP000939">
    <property type="protein sequence ID" value="ACA43519.1"/>
    <property type="molecule type" value="Genomic_DNA"/>
</dbReference>
<dbReference type="RefSeq" id="WP_003362578.1">
    <property type="nucleotide sequence ID" value="NC_010516.1"/>
</dbReference>
<dbReference type="SMR" id="B1II66"/>
<dbReference type="GeneID" id="5186690"/>
<dbReference type="KEGG" id="cbb:CLD_2205"/>
<dbReference type="HOGENOM" id="CLU_040318_1_2_9"/>
<dbReference type="Proteomes" id="UP000008541">
    <property type="component" value="Chromosome"/>
</dbReference>
<dbReference type="GO" id="GO:0022627">
    <property type="term" value="C:cytosolic small ribosomal subunit"/>
    <property type="evidence" value="ECO:0007669"/>
    <property type="project" value="TreeGrafter"/>
</dbReference>
<dbReference type="GO" id="GO:0003735">
    <property type="term" value="F:structural constituent of ribosome"/>
    <property type="evidence" value="ECO:0007669"/>
    <property type="project" value="InterPro"/>
</dbReference>
<dbReference type="GO" id="GO:0006412">
    <property type="term" value="P:translation"/>
    <property type="evidence" value="ECO:0007669"/>
    <property type="project" value="UniProtKB-UniRule"/>
</dbReference>
<dbReference type="CDD" id="cd01425">
    <property type="entry name" value="RPS2"/>
    <property type="match status" value="1"/>
</dbReference>
<dbReference type="FunFam" id="1.10.287.610:FF:000001">
    <property type="entry name" value="30S ribosomal protein S2"/>
    <property type="match status" value="1"/>
</dbReference>
<dbReference type="Gene3D" id="3.40.50.10490">
    <property type="entry name" value="Glucose-6-phosphate isomerase like protein, domain 1"/>
    <property type="match status" value="1"/>
</dbReference>
<dbReference type="Gene3D" id="1.10.287.610">
    <property type="entry name" value="Helix hairpin bin"/>
    <property type="match status" value="1"/>
</dbReference>
<dbReference type="HAMAP" id="MF_00291_B">
    <property type="entry name" value="Ribosomal_uS2_B"/>
    <property type="match status" value="1"/>
</dbReference>
<dbReference type="InterPro" id="IPR001865">
    <property type="entry name" value="Ribosomal_uS2"/>
</dbReference>
<dbReference type="InterPro" id="IPR005706">
    <property type="entry name" value="Ribosomal_uS2_bac/mit/plastid"/>
</dbReference>
<dbReference type="InterPro" id="IPR018130">
    <property type="entry name" value="Ribosomal_uS2_CS"/>
</dbReference>
<dbReference type="InterPro" id="IPR023591">
    <property type="entry name" value="Ribosomal_uS2_flav_dom_sf"/>
</dbReference>
<dbReference type="NCBIfam" id="TIGR01011">
    <property type="entry name" value="rpsB_bact"/>
    <property type="match status" value="1"/>
</dbReference>
<dbReference type="PANTHER" id="PTHR12534">
    <property type="entry name" value="30S RIBOSOMAL PROTEIN S2 PROKARYOTIC AND ORGANELLAR"/>
    <property type="match status" value="1"/>
</dbReference>
<dbReference type="PANTHER" id="PTHR12534:SF0">
    <property type="entry name" value="SMALL RIBOSOMAL SUBUNIT PROTEIN US2M"/>
    <property type="match status" value="1"/>
</dbReference>
<dbReference type="Pfam" id="PF00318">
    <property type="entry name" value="Ribosomal_S2"/>
    <property type="match status" value="1"/>
</dbReference>
<dbReference type="PRINTS" id="PR00395">
    <property type="entry name" value="RIBOSOMALS2"/>
</dbReference>
<dbReference type="SUPFAM" id="SSF52313">
    <property type="entry name" value="Ribosomal protein S2"/>
    <property type="match status" value="1"/>
</dbReference>
<dbReference type="PROSITE" id="PS00962">
    <property type="entry name" value="RIBOSOMAL_S2_1"/>
    <property type="match status" value="1"/>
</dbReference>
<proteinExistence type="inferred from homology"/>
<evidence type="ECO:0000255" key="1">
    <source>
        <dbReference type="HAMAP-Rule" id="MF_00291"/>
    </source>
</evidence>
<evidence type="ECO:0000305" key="2"/>
<sequence>MSVISMKQLLEAGVHFGHQTRRWNPKMAPYIFTERNGIYIIDLQKTVKKVEEAYNFLRSVAEEGKDVLFVGTKKQAQEAIEEEAKRSEMHFVNNRWLGGMLTNFTTITARINKLEELDKMEEDGTFEVLPKKEVIKLKNEREKLEKNLGGIRKLDANNVGAMFIVDPRKEKNAILEAKRLGIPVVAIVDTNCDPDEVDFVIPGNDDAIRAVRLIAAKMADAVLEGRQGEQLAE</sequence>
<reference key="1">
    <citation type="journal article" date="2007" name="PLoS ONE">
        <title>Analysis of the neurotoxin complex genes in Clostridium botulinum A1-A4 and B1 strains: BoNT/A3, /Ba4 and /B1 clusters are located within plasmids.</title>
        <authorList>
            <person name="Smith T.J."/>
            <person name="Hill K.K."/>
            <person name="Foley B.T."/>
            <person name="Detter J.C."/>
            <person name="Munk A.C."/>
            <person name="Bruce D.C."/>
            <person name="Doggett N.A."/>
            <person name="Smith L.A."/>
            <person name="Marks J.D."/>
            <person name="Xie G."/>
            <person name="Brettin T.S."/>
        </authorList>
    </citation>
    <scope>NUCLEOTIDE SEQUENCE [LARGE SCALE GENOMIC DNA]</scope>
    <source>
        <strain>Okra / Type B1</strain>
    </source>
</reference>
<comment type="similarity">
    <text evidence="1">Belongs to the universal ribosomal protein uS2 family.</text>
</comment>
<keyword id="KW-0687">Ribonucleoprotein</keyword>
<keyword id="KW-0689">Ribosomal protein</keyword>
<protein>
    <recommendedName>
        <fullName evidence="1">Small ribosomal subunit protein uS2</fullName>
    </recommendedName>
    <alternativeName>
        <fullName evidence="2">30S ribosomal protein S2</fullName>
    </alternativeName>
</protein>
<organism>
    <name type="scientific">Clostridium botulinum (strain Okra / Type B1)</name>
    <dbReference type="NCBI Taxonomy" id="498213"/>
    <lineage>
        <taxon>Bacteria</taxon>
        <taxon>Bacillati</taxon>
        <taxon>Bacillota</taxon>
        <taxon>Clostridia</taxon>
        <taxon>Eubacteriales</taxon>
        <taxon>Clostridiaceae</taxon>
        <taxon>Clostridium</taxon>
    </lineage>
</organism>